<evidence type="ECO:0000255" key="1">
    <source>
        <dbReference type="HAMAP-Rule" id="MF_04133"/>
    </source>
</evidence>
<evidence type="ECO:0000269" key="2">
    <source>
    </source>
</evidence>
<evidence type="ECO:0000269" key="3">
    <source>
    </source>
</evidence>
<evidence type="ECO:0000269" key="4">
    <source>
    </source>
</evidence>
<evidence type="ECO:0000269" key="5">
    <source>
    </source>
</evidence>
<evidence type="ECO:0000303" key="6">
    <source>
    </source>
</evidence>
<evidence type="ECO:0000305" key="7"/>
<evidence type="ECO:0007829" key="8">
    <source>
        <dbReference type="PDB" id="7SJ5"/>
    </source>
</evidence>
<name>CAPSD_LAMBD</name>
<reference key="1">
    <citation type="journal article" date="1982" name="J. Mol. Biol.">
        <title>Nucleotide sequence of bacteriophage lambda DNA.</title>
        <authorList>
            <person name="Sanger F."/>
            <person name="Coulson A.R."/>
            <person name="Hong G.F."/>
            <person name="Hill D.F."/>
            <person name="Petersen G.B."/>
        </authorList>
    </citation>
    <scope>NUCLEOTIDE SEQUENCE [LARGE SCALE GENOMIC DNA]</scope>
</reference>
<reference key="2">
    <citation type="journal article" date="1977" name="Proc. Natl. Acad. Sci. U.S.A.">
        <title>Assembly of biologically active proheads of bacteriophage lambda in vitro.</title>
        <authorList>
            <person name="Murialdo H."/>
            <person name="Becker A."/>
        </authorList>
    </citation>
    <scope>FUNCTION</scope>
    <scope>SUBUNIT</scope>
    <scope>SUBCELLULAR LOCATION</scope>
</reference>
<reference key="3">
    <citation type="journal article" date="1990" name="J. Mol. Biol.">
        <title>Structure and inherent properties of the bacteriophage lambda head shell. VII. Molecular design of the form-determining major capsid protein.</title>
        <authorList>
            <person name="Katsura I."/>
            <person name="Kobayashi H."/>
        </authorList>
    </citation>
    <scope>FUNCTION</scope>
</reference>
<reference key="4">
    <citation type="journal article" date="1993" name="J. Mol. Biol.">
        <title>Structural transitions during maturation of bacteriophage lambda capsids.</title>
        <authorList>
            <person name="Dokland T."/>
            <person name="Murialdo H."/>
        </authorList>
    </citation>
    <scope>FUNCTION</scope>
    <scope>SUBUNIT</scope>
</reference>
<reference key="5">
    <citation type="journal article" date="2010" name="J. Mol. Biol.">
        <title>Assembly and maturation of the bacteriophage lambda procapsid: gpC is the viral protease.</title>
        <authorList>
            <person name="Medina E."/>
            <person name="Wieczorek D."/>
            <person name="Medina E.M."/>
            <person name="Yang Q."/>
            <person name="Feiss M."/>
            <person name="Catalano C.E."/>
        </authorList>
    </citation>
    <scope>CAUTION</scope>
</reference>
<reference key="6">
    <citation type="journal article" date="2012" name="J. Biol. Chem.">
        <title>Structural and biochemical characterization of phage lambda FI protein (gpFI) reveals a novel mechanism of DNA packaging chaperone activity.</title>
        <authorList>
            <person name="Popovic A."/>
            <person name="Wu B."/>
            <person name="Arrowsmith C.H."/>
            <person name="Edwards A.M."/>
            <person name="Davidson A.R."/>
            <person name="Maxwell K.L."/>
        </authorList>
    </citation>
    <scope>INTERACTION WITH F1 PROTEIN</scope>
</reference>
<protein>
    <recommendedName>
        <fullName evidence="1 6">Major capsid protein</fullName>
    </recommendedName>
    <alternativeName>
        <fullName evidence="1">Gene product E</fullName>
        <shortName evidence="1">gpE</shortName>
    </alternativeName>
    <alternativeName>
        <fullName evidence="1">Major head protein</fullName>
    </alternativeName>
</protein>
<keyword id="KW-0002">3D-structure</keyword>
<keyword id="KW-0167">Capsid protein</keyword>
<keyword id="KW-1035">Host cytoplasm</keyword>
<keyword id="KW-0426">Late protein</keyword>
<keyword id="KW-1185">Reference proteome</keyword>
<keyword id="KW-1145">T=7 icosahedral capsid protein</keyword>
<keyword id="KW-0946">Virion</keyword>
<feature type="chain" id="PRO_0000077565" description="Major capsid protein">
    <location>
        <begin position="1"/>
        <end position="341"/>
    </location>
</feature>
<feature type="helix" evidence="8">
    <location>
        <begin position="6"/>
        <end position="12"/>
    </location>
</feature>
<feature type="helix" evidence="8">
    <location>
        <begin position="14"/>
        <end position="18"/>
    </location>
</feature>
<feature type="helix" evidence="8">
    <location>
        <begin position="22"/>
        <end position="27"/>
    </location>
</feature>
<feature type="strand" evidence="8">
    <location>
        <begin position="30"/>
        <end position="33"/>
    </location>
</feature>
<feature type="strand" evidence="8">
    <location>
        <begin position="35"/>
        <end position="40"/>
    </location>
</feature>
<feature type="helix" evidence="8">
    <location>
        <begin position="41"/>
        <end position="43"/>
    </location>
</feature>
<feature type="strand" evidence="8">
    <location>
        <begin position="52"/>
        <end position="58"/>
    </location>
</feature>
<feature type="helix" evidence="8">
    <location>
        <begin position="64"/>
        <end position="66"/>
    </location>
</feature>
<feature type="strand" evidence="8">
    <location>
        <begin position="68"/>
        <end position="73"/>
    </location>
</feature>
<feature type="strand" evidence="8">
    <location>
        <begin position="81"/>
        <end position="83"/>
    </location>
</feature>
<feature type="helix" evidence="8">
    <location>
        <begin position="98"/>
        <end position="102"/>
    </location>
</feature>
<feature type="helix" evidence="8">
    <location>
        <begin position="104"/>
        <end position="137"/>
    </location>
</feature>
<feature type="strand" evidence="8">
    <location>
        <begin position="138"/>
        <end position="142"/>
    </location>
</feature>
<feature type="strand" evidence="8">
    <location>
        <begin position="150"/>
        <end position="153"/>
    </location>
</feature>
<feature type="helix" evidence="8">
    <location>
        <begin position="158"/>
        <end position="160"/>
    </location>
</feature>
<feature type="strand" evidence="8">
    <location>
        <begin position="161"/>
        <end position="163"/>
    </location>
</feature>
<feature type="helix" evidence="8">
    <location>
        <begin position="170"/>
        <end position="172"/>
    </location>
</feature>
<feature type="turn" evidence="8">
    <location>
        <begin position="175"/>
        <end position="177"/>
    </location>
</feature>
<feature type="helix" evidence="8">
    <location>
        <begin position="181"/>
        <end position="188"/>
    </location>
</feature>
<feature type="strand" evidence="8">
    <location>
        <begin position="191"/>
        <end position="193"/>
    </location>
</feature>
<feature type="strand" evidence="8">
    <location>
        <begin position="197"/>
        <end position="200"/>
    </location>
</feature>
<feature type="helix" evidence="8">
    <location>
        <begin position="202"/>
        <end position="208"/>
    </location>
</feature>
<feature type="helix" evidence="8">
    <location>
        <begin position="212"/>
        <end position="217"/>
    </location>
</feature>
<feature type="turn" evidence="8">
    <location>
        <begin position="222"/>
        <end position="225"/>
    </location>
</feature>
<feature type="helix" evidence="8">
    <location>
        <begin position="226"/>
        <end position="231"/>
    </location>
</feature>
<feature type="helix" evidence="8">
    <location>
        <begin position="233"/>
        <end position="235"/>
    </location>
</feature>
<feature type="turn" evidence="8">
    <location>
        <begin position="236"/>
        <end position="238"/>
    </location>
</feature>
<feature type="strand" evidence="8">
    <location>
        <begin position="239"/>
        <end position="245"/>
    </location>
</feature>
<feature type="strand" evidence="8">
    <location>
        <begin position="248"/>
        <end position="253"/>
    </location>
</feature>
<feature type="strand" evidence="8">
    <location>
        <begin position="256"/>
        <end position="259"/>
    </location>
</feature>
<feature type="strand" evidence="8">
    <location>
        <begin position="262"/>
        <end position="267"/>
    </location>
</feature>
<feature type="strand" evidence="8">
    <location>
        <begin position="271"/>
        <end position="275"/>
    </location>
</feature>
<feature type="strand" evidence="8">
    <location>
        <begin position="281"/>
        <end position="285"/>
    </location>
</feature>
<feature type="helix" evidence="8">
    <location>
        <begin position="291"/>
        <end position="295"/>
    </location>
</feature>
<feature type="strand" evidence="8">
    <location>
        <begin position="304"/>
        <end position="309"/>
    </location>
</feature>
<feature type="strand" evidence="8">
    <location>
        <begin position="317"/>
        <end position="323"/>
    </location>
</feature>
<feature type="strand" evidence="8">
    <location>
        <begin position="325"/>
        <end position="330"/>
    </location>
</feature>
<feature type="helix" evidence="8">
    <location>
        <begin position="332"/>
        <end position="334"/>
    </location>
</feature>
<feature type="strand" evidence="8">
    <location>
        <begin position="336"/>
        <end position="339"/>
    </location>
</feature>
<organismHost>
    <name type="scientific">Escherichia coli</name>
    <dbReference type="NCBI Taxonomy" id="562"/>
</organismHost>
<proteinExistence type="evidence at protein level"/>
<sequence length="341" mass="38188">MSMYTTAQLLAANEQKFKFDPLFLRLFFRESYPFTTEKVYLSQIPGLVNMALYVSPIVSGEVIRSRGGSTSEFTPGYVKPKHEVNPQMTLRRLPDEDPQNLADPAYRRRRIIMQNMRDEELAIAQVEEMQAVSAVLKGKYTMTGEAFDPVEVDMGRSEENNITQSGGTEWSKRDKSTYDPTDDIEAYALNASGVVNIIVFDPKGWALFRSFKAVKEKLDTRRGSNSELETAVKDLGKAVSYKGMYGDVAIVVYSGQYVENGVKKNFLPDNTMVLGNTQARGLRTYGCIQDADAQREGINASARYPKNWVTTGDPAREFTMIQSAPLMLLADPDEFVSVQLA</sequence>
<gene>
    <name evidence="1" type="primary">E</name>
    <name type="ordered locus">lambdap08</name>
</gene>
<organism>
    <name type="scientific">Escherichia phage lambda</name>
    <name type="common">Bacteriophage lambda</name>
    <dbReference type="NCBI Taxonomy" id="2681611"/>
    <lineage>
        <taxon>Viruses</taxon>
        <taxon>Duplodnaviria</taxon>
        <taxon>Heunggongvirae</taxon>
        <taxon>Uroviricota</taxon>
        <taxon>Caudoviricetes</taxon>
        <taxon>Lambdavirus</taxon>
        <taxon>Lambdavirus lambda</taxon>
    </lineage>
</organism>
<dbReference type="EMBL" id="J02459">
    <property type="protein sequence ID" value="AAA96540.1"/>
    <property type="molecule type" value="Genomic_DNA"/>
</dbReference>
<dbReference type="PIR" id="H04333">
    <property type="entry name" value="VHBPEL"/>
</dbReference>
<dbReference type="RefSeq" id="NP_040587.1">
    <property type="nucleotide sequence ID" value="NC_001416.1"/>
</dbReference>
<dbReference type="PDB" id="7SJ5">
    <property type="method" value="X-ray"/>
    <property type="resolution" value="2.69 A"/>
    <property type="chains" value="A/B/C/D=1-341"/>
</dbReference>
<dbReference type="PDB" id="7VI9">
    <property type="method" value="EM"/>
    <property type="resolution" value="5.03 A"/>
    <property type="chains" value="A/B/C/D/E/F/G=1-341"/>
</dbReference>
<dbReference type="PDB" id="7VIA">
    <property type="method" value="EM"/>
    <property type="resolution" value="3.88 A"/>
    <property type="chains" value="A/B/C/D/E/F/G=1-341"/>
</dbReference>
<dbReference type="PDB" id="7VII">
    <property type="method" value="EM"/>
    <property type="resolution" value="5.60 A"/>
    <property type="chains" value="A/B/C/D/E/F/G=1-341"/>
</dbReference>
<dbReference type="PDB" id="7VIK">
    <property type="method" value="EM"/>
    <property type="resolution" value="3.76 A"/>
    <property type="chains" value="A/B/C/D/E/F/G=1-341"/>
</dbReference>
<dbReference type="PDB" id="8K39">
    <property type="method" value="EM"/>
    <property type="resolution" value="4.00 A"/>
    <property type="chains" value="0/1/2/3/4/5/6/7/A/B/C/D/E/F/G/H/I/J/K/L/M/N/O/P/Q/R/S/T/g/h=1-341"/>
</dbReference>
<dbReference type="PDB" id="8XOU">
    <property type="method" value="EM"/>
    <property type="resolution" value="5.58 A"/>
    <property type="chains" value="A0/A1/A2/A3/A4/C0/C1/C2/C3/C4/D0/D1/D2/D3/D4/E0/E1/E2/E3/E4/F0/F1/F2/F3/F4/G0/G1/G2/G3/G4=1-341"/>
</dbReference>
<dbReference type="PDB" id="8XQB">
    <property type="method" value="EM"/>
    <property type="resolution" value="4.07 A"/>
    <property type="chains" value="A0/A1/A2/A3/A4/C0/C1/C2/C3/C4/G0/G1/G2/G3/G4=1-341"/>
</dbReference>
<dbReference type="PDBsum" id="7SJ5"/>
<dbReference type="PDBsum" id="7VI9"/>
<dbReference type="PDBsum" id="7VIA"/>
<dbReference type="PDBsum" id="7VII"/>
<dbReference type="PDBsum" id="7VIK"/>
<dbReference type="PDBsum" id="8K39"/>
<dbReference type="PDBsum" id="8XOU"/>
<dbReference type="PDBsum" id="8XQB"/>
<dbReference type="EMDB" id="EMD-32004"/>
<dbReference type="EMDB" id="EMD-32005"/>
<dbReference type="EMDB" id="EMD-32010"/>
<dbReference type="EMDB" id="EMD-32011"/>
<dbReference type="EMDB" id="EMD-36848"/>
<dbReference type="EMDB" id="EMD-38541"/>
<dbReference type="EMDB" id="EMD-38572"/>
<dbReference type="SMR" id="P03713"/>
<dbReference type="IntAct" id="P03713">
    <property type="interactions" value="3"/>
</dbReference>
<dbReference type="GeneID" id="2703482"/>
<dbReference type="KEGG" id="vg:2703482"/>
<dbReference type="Proteomes" id="UP000001711">
    <property type="component" value="Genome"/>
</dbReference>
<dbReference type="GO" id="GO:0030430">
    <property type="term" value="C:host cell cytoplasm"/>
    <property type="evidence" value="ECO:0007669"/>
    <property type="project" value="UniProtKB-SubCell"/>
</dbReference>
<dbReference type="GO" id="GO:0039620">
    <property type="term" value="C:T=7 icosahedral viral capsid"/>
    <property type="evidence" value="ECO:0000314"/>
    <property type="project" value="UniProtKB"/>
</dbReference>
<dbReference type="GO" id="GO:0019028">
    <property type="term" value="C:viral capsid"/>
    <property type="evidence" value="ECO:0000314"/>
    <property type="project" value="UniProtKB"/>
</dbReference>
<dbReference type="FunFam" id="3.30.1930.10:FF:000001">
    <property type="entry name" value="Major capsid protein E"/>
    <property type="match status" value="1"/>
</dbReference>
<dbReference type="Gene3D" id="3.30.1930.10">
    <property type="entry name" value="capsid protein of prophage domain"/>
    <property type="match status" value="1"/>
</dbReference>
<dbReference type="Gene3D" id="3.15.30.10">
    <property type="entry name" value="putative capsid protein of prophage domain like"/>
    <property type="match status" value="1"/>
</dbReference>
<dbReference type="HAMAP" id="MF_04133">
    <property type="entry name" value="CAPSID_LAMBDA"/>
    <property type="match status" value="1"/>
</dbReference>
<dbReference type="InterPro" id="IPR005564">
    <property type="entry name" value="Major_capsid_GpE"/>
</dbReference>
<dbReference type="Pfam" id="PF03864">
    <property type="entry name" value="Phage_cap_E"/>
    <property type="match status" value="1"/>
</dbReference>
<comment type="function">
    <text evidence="1 2 4 5">Assembles to form an icosahedral capsid with a T=7 symmetry. The icosahedral capsid is about 60 nm in diameter and composed of 415 major capsid proteins. The assembly is primed by the interaction between capsid assembly protease and portal dodecamer, and major capsid proteins assemble cooperatively to form the procapsid with the help of capsid scaffolding protein. Major capsid protein forms hexons and pentons of the icosahedron. Viral genomic DNA is packaged into the procapsid through the portal vertex (By similarity). The packaging triggers a dramatic reconfiguration of the capsid shell, expanding from roughly 50nm to 60nm while the capsid thickness decreases. The capsid decoration protein binds the expanded capsid and stabilizes it.</text>
</comment>
<comment type="subunit">
    <text evidence="3 4 5">Homomultimer (PubMed:265585, PubMed:8411174). Interacts with FI protein (PubMed:22801427).</text>
</comment>
<comment type="subcellular location">
    <subcellularLocation>
        <location evidence="1 4">Virion</location>
    </subcellularLocation>
    <subcellularLocation>
        <location evidence="1 4">Host cytoplasm</location>
    </subcellularLocation>
    <text evidence="1 4">Forms the capsid icosahedric shell.</text>
</comment>
<comment type="similarity">
    <text evidence="1">Belongs to the lambda phage major capsid protein family.</text>
</comment>
<comment type="caution">
    <text evidence="7">Some of the E protein may be covalently linked with an equimolar amount of protein C and cleaved to yield minor capsid proteins X1 and X2. But recent data fail to detect cleavage products.</text>
</comment>
<accession>P03713</accession>